<dbReference type="EC" id="6.1.1.11" evidence="1"/>
<dbReference type="EMBL" id="CP000890">
    <property type="protein sequence ID" value="ABX78713.1"/>
    <property type="molecule type" value="Genomic_DNA"/>
</dbReference>
<dbReference type="RefSeq" id="WP_010958060.1">
    <property type="nucleotide sequence ID" value="NC_010117.1"/>
</dbReference>
<dbReference type="SMR" id="A9NDR1"/>
<dbReference type="KEGG" id="cbs:COXBURSA331_A1339"/>
<dbReference type="HOGENOM" id="CLU_023797_1_1_6"/>
<dbReference type="UniPathway" id="UPA00906">
    <property type="reaction ID" value="UER00895"/>
</dbReference>
<dbReference type="GO" id="GO:0005737">
    <property type="term" value="C:cytoplasm"/>
    <property type="evidence" value="ECO:0007669"/>
    <property type="project" value="UniProtKB-SubCell"/>
</dbReference>
<dbReference type="GO" id="GO:0005524">
    <property type="term" value="F:ATP binding"/>
    <property type="evidence" value="ECO:0007669"/>
    <property type="project" value="UniProtKB-UniRule"/>
</dbReference>
<dbReference type="GO" id="GO:0004828">
    <property type="term" value="F:serine-tRNA ligase activity"/>
    <property type="evidence" value="ECO:0007669"/>
    <property type="project" value="UniProtKB-UniRule"/>
</dbReference>
<dbReference type="GO" id="GO:0016260">
    <property type="term" value="P:selenocysteine biosynthetic process"/>
    <property type="evidence" value="ECO:0007669"/>
    <property type="project" value="UniProtKB-UniRule"/>
</dbReference>
<dbReference type="GO" id="GO:0006434">
    <property type="term" value="P:seryl-tRNA aminoacylation"/>
    <property type="evidence" value="ECO:0007669"/>
    <property type="project" value="UniProtKB-UniRule"/>
</dbReference>
<dbReference type="CDD" id="cd00770">
    <property type="entry name" value="SerRS_core"/>
    <property type="match status" value="1"/>
</dbReference>
<dbReference type="Gene3D" id="3.30.930.10">
    <property type="entry name" value="Bira Bifunctional Protein, Domain 2"/>
    <property type="match status" value="1"/>
</dbReference>
<dbReference type="Gene3D" id="1.10.287.40">
    <property type="entry name" value="Serine-tRNA synthetase, tRNA binding domain"/>
    <property type="match status" value="1"/>
</dbReference>
<dbReference type="HAMAP" id="MF_00176">
    <property type="entry name" value="Ser_tRNA_synth_type1"/>
    <property type="match status" value="1"/>
</dbReference>
<dbReference type="InterPro" id="IPR002314">
    <property type="entry name" value="aa-tRNA-synt_IIb"/>
</dbReference>
<dbReference type="InterPro" id="IPR006195">
    <property type="entry name" value="aa-tRNA-synth_II"/>
</dbReference>
<dbReference type="InterPro" id="IPR045864">
    <property type="entry name" value="aa-tRNA-synth_II/BPL/LPL"/>
</dbReference>
<dbReference type="InterPro" id="IPR002317">
    <property type="entry name" value="Ser-tRNA-ligase_type_1"/>
</dbReference>
<dbReference type="InterPro" id="IPR015866">
    <property type="entry name" value="Ser-tRNA-synth_1_N"/>
</dbReference>
<dbReference type="InterPro" id="IPR042103">
    <property type="entry name" value="SerRS_1_N_sf"/>
</dbReference>
<dbReference type="InterPro" id="IPR033729">
    <property type="entry name" value="SerRS_core"/>
</dbReference>
<dbReference type="InterPro" id="IPR010978">
    <property type="entry name" value="tRNA-bd_arm"/>
</dbReference>
<dbReference type="NCBIfam" id="TIGR00414">
    <property type="entry name" value="serS"/>
    <property type="match status" value="1"/>
</dbReference>
<dbReference type="PANTHER" id="PTHR43697:SF1">
    <property type="entry name" value="SERINE--TRNA LIGASE"/>
    <property type="match status" value="1"/>
</dbReference>
<dbReference type="PANTHER" id="PTHR43697">
    <property type="entry name" value="SERYL-TRNA SYNTHETASE"/>
    <property type="match status" value="1"/>
</dbReference>
<dbReference type="Pfam" id="PF02403">
    <property type="entry name" value="Seryl_tRNA_N"/>
    <property type="match status" value="1"/>
</dbReference>
<dbReference type="Pfam" id="PF00587">
    <property type="entry name" value="tRNA-synt_2b"/>
    <property type="match status" value="1"/>
</dbReference>
<dbReference type="PIRSF" id="PIRSF001529">
    <property type="entry name" value="Ser-tRNA-synth_IIa"/>
    <property type="match status" value="1"/>
</dbReference>
<dbReference type="PRINTS" id="PR00981">
    <property type="entry name" value="TRNASYNTHSER"/>
</dbReference>
<dbReference type="SUPFAM" id="SSF55681">
    <property type="entry name" value="Class II aaRS and biotin synthetases"/>
    <property type="match status" value="1"/>
</dbReference>
<dbReference type="SUPFAM" id="SSF46589">
    <property type="entry name" value="tRNA-binding arm"/>
    <property type="match status" value="1"/>
</dbReference>
<dbReference type="PROSITE" id="PS50862">
    <property type="entry name" value="AA_TRNA_LIGASE_II"/>
    <property type="match status" value="1"/>
</dbReference>
<name>SYS_COXBR</name>
<feature type="chain" id="PRO_1000077194" description="Serine--tRNA ligase">
    <location>
        <begin position="1"/>
        <end position="423"/>
    </location>
</feature>
<feature type="binding site" evidence="1">
    <location>
        <begin position="231"/>
        <end position="233"/>
    </location>
    <ligand>
        <name>L-serine</name>
        <dbReference type="ChEBI" id="CHEBI:33384"/>
    </ligand>
</feature>
<feature type="binding site" evidence="1">
    <location>
        <begin position="262"/>
        <end position="264"/>
    </location>
    <ligand>
        <name>ATP</name>
        <dbReference type="ChEBI" id="CHEBI:30616"/>
    </ligand>
</feature>
<feature type="binding site" evidence="1">
    <location>
        <position position="285"/>
    </location>
    <ligand>
        <name>L-serine</name>
        <dbReference type="ChEBI" id="CHEBI:33384"/>
    </ligand>
</feature>
<feature type="binding site" evidence="1">
    <location>
        <begin position="349"/>
        <end position="352"/>
    </location>
    <ligand>
        <name>ATP</name>
        <dbReference type="ChEBI" id="CHEBI:30616"/>
    </ligand>
</feature>
<feature type="binding site" evidence="1">
    <location>
        <position position="385"/>
    </location>
    <ligand>
        <name>L-serine</name>
        <dbReference type="ChEBI" id="CHEBI:33384"/>
    </ligand>
</feature>
<proteinExistence type="inferred from homology"/>
<organism>
    <name type="scientific">Coxiella burnetii (strain RSA 331 / Henzerling II)</name>
    <dbReference type="NCBI Taxonomy" id="360115"/>
    <lineage>
        <taxon>Bacteria</taxon>
        <taxon>Pseudomonadati</taxon>
        <taxon>Pseudomonadota</taxon>
        <taxon>Gammaproteobacteria</taxon>
        <taxon>Legionellales</taxon>
        <taxon>Coxiellaceae</taxon>
        <taxon>Coxiella</taxon>
    </lineage>
</organism>
<accession>A9NDR1</accession>
<evidence type="ECO:0000255" key="1">
    <source>
        <dbReference type="HAMAP-Rule" id="MF_00176"/>
    </source>
</evidence>
<reference key="1">
    <citation type="submission" date="2007-11" db="EMBL/GenBank/DDBJ databases">
        <title>Genome sequencing of phylogenetically and phenotypically diverse Coxiella burnetii isolates.</title>
        <authorList>
            <person name="Seshadri R."/>
            <person name="Samuel J.E."/>
        </authorList>
    </citation>
    <scope>NUCLEOTIDE SEQUENCE [LARGE SCALE GENOMIC DNA]</scope>
    <source>
        <strain>RSA 331 / Henzerling II</strain>
    </source>
</reference>
<protein>
    <recommendedName>
        <fullName evidence="1">Serine--tRNA ligase</fullName>
        <ecNumber evidence="1">6.1.1.11</ecNumber>
    </recommendedName>
    <alternativeName>
        <fullName evidence="1">Seryl-tRNA synthetase</fullName>
        <shortName evidence="1">SerRS</shortName>
    </alternativeName>
    <alternativeName>
        <fullName evidence="1">Seryl-tRNA(Ser/Sec) synthetase</fullName>
    </alternativeName>
</protein>
<keyword id="KW-0030">Aminoacyl-tRNA synthetase</keyword>
<keyword id="KW-0067">ATP-binding</keyword>
<keyword id="KW-0963">Cytoplasm</keyword>
<keyword id="KW-0436">Ligase</keyword>
<keyword id="KW-0547">Nucleotide-binding</keyword>
<keyword id="KW-0648">Protein biosynthesis</keyword>
<gene>
    <name evidence="1" type="primary">serS</name>
    <name type="ordered locus">COXBURSA331_A1339</name>
</gene>
<sequence length="423" mass="48135">MLDPKILRQNLEHVVEKLRRRGFEMDSDTFLQLENKRKEAQLAIQSFQTKRNQLSKTIGMAKSKGENPELLMAEVSQLNDELKQEEANFETIQKAFSDFQLAIPNLPHDSVPDGKSENDNREIRQWGAPPGFDFTPKDHTVLGERDNQLDFEAAAKLSGARFVVLRGSLARAHRALAQFMLDLHTDQHGYEEVYVPYLVHEECLYGTGQLPKFREEQFQVAGDRNFFLVPTGEVPLVNLARDEIIEAPALPKKWVAQTPCFRSEAGSYGKDVRGMIRQHQFQKVELVQLVQPENSYQALEEITRQAEKVLQLLALPYRVVELCAGDLGFAAAKTYDLEVWLPSQNKYREISSCSNCEDFQARRIQARWRNPKTGKPELLHTLNGSGLAVGRTLVAVMENYQQADGHIRVPDALKSYMGGVDYF</sequence>
<comment type="function">
    <text evidence="1">Catalyzes the attachment of serine to tRNA(Ser). Is also able to aminoacylate tRNA(Sec) with serine, to form the misacylated tRNA L-seryl-tRNA(Sec), which will be further converted into selenocysteinyl-tRNA(Sec).</text>
</comment>
<comment type="catalytic activity">
    <reaction evidence="1">
        <text>tRNA(Ser) + L-serine + ATP = L-seryl-tRNA(Ser) + AMP + diphosphate + H(+)</text>
        <dbReference type="Rhea" id="RHEA:12292"/>
        <dbReference type="Rhea" id="RHEA-COMP:9669"/>
        <dbReference type="Rhea" id="RHEA-COMP:9703"/>
        <dbReference type="ChEBI" id="CHEBI:15378"/>
        <dbReference type="ChEBI" id="CHEBI:30616"/>
        <dbReference type="ChEBI" id="CHEBI:33019"/>
        <dbReference type="ChEBI" id="CHEBI:33384"/>
        <dbReference type="ChEBI" id="CHEBI:78442"/>
        <dbReference type="ChEBI" id="CHEBI:78533"/>
        <dbReference type="ChEBI" id="CHEBI:456215"/>
        <dbReference type="EC" id="6.1.1.11"/>
    </reaction>
</comment>
<comment type="catalytic activity">
    <reaction evidence="1">
        <text>tRNA(Sec) + L-serine + ATP = L-seryl-tRNA(Sec) + AMP + diphosphate + H(+)</text>
        <dbReference type="Rhea" id="RHEA:42580"/>
        <dbReference type="Rhea" id="RHEA-COMP:9742"/>
        <dbReference type="Rhea" id="RHEA-COMP:10128"/>
        <dbReference type="ChEBI" id="CHEBI:15378"/>
        <dbReference type="ChEBI" id="CHEBI:30616"/>
        <dbReference type="ChEBI" id="CHEBI:33019"/>
        <dbReference type="ChEBI" id="CHEBI:33384"/>
        <dbReference type="ChEBI" id="CHEBI:78442"/>
        <dbReference type="ChEBI" id="CHEBI:78533"/>
        <dbReference type="ChEBI" id="CHEBI:456215"/>
        <dbReference type="EC" id="6.1.1.11"/>
    </reaction>
</comment>
<comment type="pathway">
    <text evidence="1">Aminoacyl-tRNA biosynthesis; selenocysteinyl-tRNA(Sec) biosynthesis; L-seryl-tRNA(Sec) from L-serine and tRNA(Sec): step 1/1.</text>
</comment>
<comment type="subunit">
    <text evidence="1">Homodimer. The tRNA molecule binds across the dimer.</text>
</comment>
<comment type="subcellular location">
    <subcellularLocation>
        <location evidence="1">Cytoplasm</location>
    </subcellularLocation>
</comment>
<comment type="domain">
    <text evidence="1">Consists of two distinct domains, a catalytic core and a N-terminal extension that is involved in tRNA binding.</text>
</comment>
<comment type="similarity">
    <text evidence="1">Belongs to the class-II aminoacyl-tRNA synthetase family. Type-1 seryl-tRNA synthetase subfamily.</text>
</comment>